<keyword id="KW-0251">Elongation factor</keyword>
<keyword id="KW-0648">Protein biosynthesis</keyword>
<accession>C3N849</accession>
<name>EF1B_SACI7</name>
<sequence>MTDVLVVLKVFPDSDEVNLDNLYTDISNKLPKEYRIIRKETEPIAFGLNALILYVQMPEQTEGGTDNLEEVVNNIQGVSHAEVVGITRLGF</sequence>
<proteinExistence type="inferred from homology"/>
<gene>
    <name evidence="1" type="primary">ef1b</name>
    <name type="ordered locus">YG5714_2082</name>
</gene>
<dbReference type="EMBL" id="CP001403">
    <property type="protein sequence ID" value="ACP46336.1"/>
    <property type="molecule type" value="Genomic_DNA"/>
</dbReference>
<dbReference type="RefSeq" id="WP_012711931.1">
    <property type="nucleotide sequence ID" value="NC_012622.1"/>
</dbReference>
<dbReference type="SMR" id="C3N849"/>
<dbReference type="KEGG" id="siy:YG5714_2082"/>
<dbReference type="HOGENOM" id="CLU_165896_1_0_2"/>
<dbReference type="Proteomes" id="UP000002308">
    <property type="component" value="Chromosome"/>
</dbReference>
<dbReference type="GO" id="GO:0003746">
    <property type="term" value="F:translation elongation factor activity"/>
    <property type="evidence" value="ECO:0007669"/>
    <property type="project" value="UniProtKB-UniRule"/>
</dbReference>
<dbReference type="CDD" id="cd00292">
    <property type="entry name" value="EF1B"/>
    <property type="match status" value="1"/>
</dbReference>
<dbReference type="Gene3D" id="3.30.70.60">
    <property type="match status" value="1"/>
</dbReference>
<dbReference type="HAMAP" id="MF_00043">
    <property type="entry name" value="EF1_beta"/>
    <property type="match status" value="1"/>
</dbReference>
<dbReference type="InterPro" id="IPR036219">
    <property type="entry name" value="eEF-1beta-like_sf"/>
</dbReference>
<dbReference type="InterPro" id="IPR014038">
    <property type="entry name" value="EF1B_bsu/dsu_GNE"/>
</dbReference>
<dbReference type="InterPro" id="IPR014717">
    <property type="entry name" value="Transl_elong_EF1B/ribsomal_bS6"/>
</dbReference>
<dbReference type="InterPro" id="IPR004542">
    <property type="entry name" value="Transl_elong_EF1B_B_arc"/>
</dbReference>
<dbReference type="NCBIfam" id="TIGR00489">
    <property type="entry name" value="aEF-1_beta"/>
    <property type="match status" value="1"/>
</dbReference>
<dbReference type="NCBIfam" id="NF001670">
    <property type="entry name" value="PRK00435.1"/>
    <property type="match status" value="1"/>
</dbReference>
<dbReference type="PANTHER" id="PTHR39647">
    <property type="entry name" value="ELONGATION FACTOR 1-BETA"/>
    <property type="match status" value="1"/>
</dbReference>
<dbReference type="PANTHER" id="PTHR39647:SF1">
    <property type="entry name" value="ELONGATION FACTOR 1-BETA"/>
    <property type="match status" value="1"/>
</dbReference>
<dbReference type="Pfam" id="PF00736">
    <property type="entry name" value="EF1_GNE"/>
    <property type="match status" value="1"/>
</dbReference>
<dbReference type="PIRSF" id="PIRSF006521">
    <property type="entry name" value="Transl_elong_EF1B_B_arc"/>
    <property type="match status" value="1"/>
</dbReference>
<dbReference type="SMART" id="SM00888">
    <property type="entry name" value="EF1_GNE"/>
    <property type="match status" value="1"/>
</dbReference>
<dbReference type="SUPFAM" id="SSF54984">
    <property type="entry name" value="eEF-1beta-like"/>
    <property type="match status" value="1"/>
</dbReference>
<feature type="chain" id="PRO_1000202147" description="Elongation factor 1-beta">
    <location>
        <begin position="1"/>
        <end position="91"/>
    </location>
</feature>
<evidence type="ECO:0000255" key="1">
    <source>
        <dbReference type="HAMAP-Rule" id="MF_00043"/>
    </source>
</evidence>
<organism>
    <name type="scientific">Saccharolobus islandicus (strain Y.G.57.14 / Yellowstone #1)</name>
    <name type="common">Sulfolobus islandicus</name>
    <dbReference type="NCBI Taxonomy" id="439386"/>
    <lineage>
        <taxon>Archaea</taxon>
        <taxon>Thermoproteota</taxon>
        <taxon>Thermoprotei</taxon>
        <taxon>Sulfolobales</taxon>
        <taxon>Sulfolobaceae</taxon>
        <taxon>Saccharolobus</taxon>
    </lineage>
</organism>
<protein>
    <recommendedName>
        <fullName evidence="1">Elongation factor 1-beta</fullName>
        <shortName evidence="1">EF-1-beta</shortName>
    </recommendedName>
    <alternativeName>
        <fullName evidence="1">aEF-1beta</fullName>
    </alternativeName>
</protein>
<comment type="function">
    <text evidence="1">Promotes the exchange of GDP for GTP in EF-1-alpha/GDP, thus allowing the regeneration of EF-1-alpha/GTP that could then be used to form the ternary complex EF-1-alpha/GTP/AAtRNA.</text>
</comment>
<comment type="similarity">
    <text evidence="1">Belongs to the EF-1-beta/EF-1-delta family.</text>
</comment>
<reference key="1">
    <citation type="journal article" date="2009" name="Proc. Natl. Acad. Sci. U.S.A.">
        <title>Biogeography of the Sulfolobus islandicus pan-genome.</title>
        <authorList>
            <person name="Reno M.L."/>
            <person name="Held N.L."/>
            <person name="Fields C.J."/>
            <person name="Burke P.V."/>
            <person name="Whitaker R.J."/>
        </authorList>
    </citation>
    <scope>NUCLEOTIDE SEQUENCE [LARGE SCALE GENOMIC DNA]</scope>
    <source>
        <strain>Y.G.57.14 / Yellowstone #1</strain>
    </source>
</reference>